<evidence type="ECO:0000255" key="1">
    <source>
        <dbReference type="HAMAP-Rule" id="MF_00661"/>
    </source>
</evidence>
<evidence type="ECO:0000256" key="2">
    <source>
        <dbReference type="SAM" id="MobiDB-lite"/>
    </source>
</evidence>
<keyword id="KW-0067">ATP-binding</keyword>
<keyword id="KW-0963">Cytoplasm</keyword>
<keyword id="KW-0347">Helicase</keyword>
<keyword id="KW-0378">Hydrolase</keyword>
<keyword id="KW-0547">Nucleotide-binding</keyword>
<keyword id="KW-0694">RNA-binding</keyword>
<comment type="function">
    <text evidence="1">DEAD-box RNA helicase involved in RNA degradation. Has RNA-dependent ATPase activity and unwinds double-stranded RNA.</text>
</comment>
<comment type="catalytic activity">
    <reaction evidence="1">
        <text>ATP + H2O = ADP + phosphate + H(+)</text>
        <dbReference type="Rhea" id="RHEA:13065"/>
        <dbReference type="ChEBI" id="CHEBI:15377"/>
        <dbReference type="ChEBI" id="CHEBI:15378"/>
        <dbReference type="ChEBI" id="CHEBI:30616"/>
        <dbReference type="ChEBI" id="CHEBI:43474"/>
        <dbReference type="ChEBI" id="CHEBI:456216"/>
        <dbReference type="EC" id="3.6.4.13"/>
    </reaction>
</comment>
<comment type="subunit">
    <text evidence="1">Component of the RNA degradosome, which is a multiprotein complex involved in RNA processing and mRNA degradation.</text>
</comment>
<comment type="subcellular location">
    <subcellularLocation>
        <location evidence="1">Cytoplasm</location>
    </subcellularLocation>
</comment>
<comment type="similarity">
    <text evidence="1">Belongs to the DEAD box helicase family. RhlB subfamily.</text>
</comment>
<gene>
    <name evidence="1" type="primary">rhlB</name>
    <name type="ordered locus">Spro_0158</name>
</gene>
<accession>A8G828</accession>
<name>RHLB_SERP5</name>
<sequence>MSKTHLTEQKFSDFALHPLVLEALEKKGFQHCTPIQALALPLTLSGRDVAGQAQTGTGKTLAFLTSTFHYLLSHPAKQDRKINQPRALIMAPTRELAVQIHSDAEALSQSTGLKMGLAYGGDGYDKQLKVLESGVDILVGTTGRLIDYAKQNYIDLGAIQVVVLDEADRMYDLGFIKDIRWLFRRMPAVDQRLNMLFSATLSYRVRELAFEQMNNAEYVEVEPEQKTGHRIKEELFYPSNEEKMRLLQTLIEEEWPDRCIIFANTKHRCEDVWGHLAADGHRVGLLTGDVAQKKRLRILDDFTKGNLDILVATDVAARGLHIPLVTHVFNYDLPDDCEDYVHRIGRTGRAGESGHSISLACEEYALNLPAIETYTGHSIPVSKYNSDALLSDLPAPKRLARPRGGNGPRRNSAPRRGGAPRNNRKRSG</sequence>
<reference key="1">
    <citation type="submission" date="2007-09" db="EMBL/GenBank/DDBJ databases">
        <title>Complete sequence of chromosome of Serratia proteamaculans 568.</title>
        <authorList>
            <consortium name="US DOE Joint Genome Institute"/>
            <person name="Copeland A."/>
            <person name="Lucas S."/>
            <person name="Lapidus A."/>
            <person name="Barry K."/>
            <person name="Glavina del Rio T."/>
            <person name="Dalin E."/>
            <person name="Tice H."/>
            <person name="Pitluck S."/>
            <person name="Chain P."/>
            <person name="Malfatti S."/>
            <person name="Shin M."/>
            <person name="Vergez L."/>
            <person name="Schmutz J."/>
            <person name="Larimer F."/>
            <person name="Land M."/>
            <person name="Hauser L."/>
            <person name="Kyrpides N."/>
            <person name="Kim E."/>
            <person name="Taghavi S."/>
            <person name="Newman L."/>
            <person name="Vangronsveld J."/>
            <person name="van der Lelie D."/>
            <person name="Richardson P."/>
        </authorList>
    </citation>
    <scope>NUCLEOTIDE SEQUENCE [LARGE SCALE GENOMIC DNA]</scope>
    <source>
        <strain>568</strain>
    </source>
</reference>
<feature type="chain" id="PRO_1000082855" description="ATP-dependent RNA helicase RhlB">
    <location>
        <begin position="1"/>
        <end position="428"/>
    </location>
</feature>
<feature type="domain" description="Helicase ATP-binding" evidence="1">
    <location>
        <begin position="40"/>
        <end position="219"/>
    </location>
</feature>
<feature type="domain" description="Helicase C-terminal" evidence="1">
    <location>
        <begin position="245"/>
        <end position="390"/>
    </location>
</feature>
<feature type="region of interest" description="Disordered" evidence="2">
    <location>
        <begin position="392"/>
        <end position="428"/>
    </location>
</feature>
<feature type="short sequence motif" description="Q motif">
    <location>
        <begin position="9"/>
        <end position="37"/>
    </location>
</feature>
<feature type="short sequence motif" description="DEAD box">
    <location>
        <begin position="165"/>
        <end position="168"/>
    </location>
</feature>
<feature type="compositionally biased region" description="Low complexity" evidence="2">
    <location>
        <begin position="408"/>
        <end position="421"/>
    </location>
</feature>
<feature type="binding site" evidence="1">
    <location>
        <begin position="53"/>
        <end position="60"/>
    </location>
    <ligand>
        <name>ATP</name>
        <dbReference type="ChEBI" id="CHEBI:30616"/>
    </ligand>
</feature>
<protein>
    <recommendedName>
        <fullName evidence="1">ATP-dependent RNA helicase RhlB</fullName>
        <ecNumber evidence="1">3.6.4.13</ecNumber>
    </recommendedName>
</protein>
<proteinExistence type="inferred from homology"/>
<dbReference type="EC" id="3.6.4.13" evidence="1"/>
<dbReference type="EMBL" id="CP000826">
    <property type="protein sequence ID" value="ABV39268.1"/>
    <property type="molecule type" value="Genomic_DNA"/>
</dbReference>
<dbReference type="SMR" id="A8G828"/>
<dbReference type="STRING" id="399741.Spro_0158"/>
<dbReference type="KEGG" id="spe:Spro_0158"/>
<dbReference type="eggNOG" id="COG0513">
    <property type="taxonomic scope" value="Bacteria"/>
</dbReference>
<dbReference type="HOGENOM" id="CLU_003041_1_3_6"/>
<dbReference type="OrthoDB" id="9805696at2"/>
<dbReference type="GO" id="GO:0005829">
    <property type="term" value="C:cytosol"/>
    <property type="evidence" value="ECO:0007669"/>
    <property type="project" value="TreeGrafter"/>
</dbReference>
<dbReference type="GO" id="GO:0005524">
    <property type="term" value="F:ATP binding"/>
    <property type="evidence" value="ECO:0007669"/>
    <property type="project" value="UniProtKB-UniRule"/>
</dbReference>
<dbReference type="GO" id="GO:0016887">
    <property type="term" value="F:ATP hydrolysis activity"/>
    <property type="evidence" value="ECO:0007669"/>
    <property type="project" value="RHEA"/>
</dbReference>
<dbReference type="GO" id="GO:0003723">
    <property type="term" value="F:RNA binding"/>
    <property type="evidence" value="ECO:0007669"/>
    <property type="project" value="UniProtKB-UniRule"/>
</dbReference>
<dbReference type="GO" id="GO:0003724">
    <property type="term" value="F:RNA helicase activity"/>
    <property type="evidence" value="ECO:0007669"/>
    <property type="project" value="UniProtKB-UniRule"/>
</dbReference>
<dbReference type="GO" id="GO:0006401">
    <property type="term" value="P:RNA catabolic process"/>
    <property type="evidence" value="ECO:0007669"/>
    <property type="project" value="UniProtKB-UniRule"/>
</dbReference>
<dbReference type="CDD" id="cd00268">
    <property type="entry name" value="DEADc"/>
    <property type="match status" value="1"/>
</dbReference>
<dbReference type="CDD" id="cd18787">
    <property type="entry name" value="SF2_C_DEAD"/>
    <property type="match status" value="1"/>
</dbReference>
<dbReference type="FunFam" id="3.40.50.300:FF:000312">
    <property type="entry name" value="ATP-dependent RNA helicase RhlB"/>
    <property type="match status" value="1"/>
</dbReference>
<dbReference type="Gene3D" id="3.40.50.300">
    <property type="entry name" value="P-loop containing nucleotide triphosphate hydrolases"/>
    <property type="match status" value="2"/>
</dbReference>
<dbReference type="HAMAP" id="MF_00661">
    <property type="entry name" value="DEAD_helicase_RhlB"/>
    <property type="match status" value="1"/>
</dbReference>
<dbReference type="InterPro" id="IPR011545">
    <property type="entry name" value="DEAD/DEAH_box_helicase_dom"/>
</dbReference>
<dbReference type="InterPro" id="IPR050079">
    <property type="entry name" value="DEAD_box_RNA_helicase"/>
</dbReference>
<dbReference type="InterPro" id="IPR014001">
    <property type="entry name" value="Helicase_ATP-bd"/>
</dbReference>
<dbReference type="InterPro" id="IPR001650">
    <property type="entry name" value="Helicase_C-like"/>
</dbReference>
<dbReference type="InterPro" id="IPR027417">
    <property type="entry name" value="P-loop_NTPase"/>
</dbReference>
<dbReference type="InterPro" id="IPR000629">
    <property type="entry name" value="RNA-helicase_DEAD-box_CS"/>
</dbReference>
<dbReference type="InterPro" id="IPR023554">
    <property type="entry name" value="RNA_helicase_ATP-dep_RhlB"/>
</dbReference>
<dbReference type="InterPro" id="IPR014014">
    <property type="entry name" value="RNA_helicase_DEAD_Q_motif"/>
</dbReference>
<dbReference type="NCBIfam" id="NF003419">
    <property type="entry name" value="PRK04837.1"/>
    <property type="match status" value="1"/>
</dbReference>
<dbReference type="PANTHER" id="PTHR47959:SF10">
    <property type="entry name" value="ATP-DEPENDENT RNA HELICASE RHLB"/>
    <property type="match status" value="1"/>
</dbReference>
<dbReference type="PANTHER" id="PTHR47959">
    <property type="entry name" value="ATP-DEPENDENT RNA HELICASE RHLE-RELATED"/>
    <property type="match status" value="1"/>
</dbReference>
<dbReference type="Pfam" id="PF00270">
    <property type="entry name" value="DEAD"/>
    <property type="match status" value="1"/>
</dbReference>
<dbReference type="Pfam" id="PF00271">
    <property type="entry name" value="Helicase_C"/>
    <property type="match status" value="1"/>
</dbReference>
<dbReference type="SMART" id="SM00487">
    <property type="entry name" value="DEXDc"/>
    <property type="match status" value="1"/>
</dbReference>
<dbReference type="SMART" id="SM00490">
    <property type="entry name" value="HELICc"/>
    <property type="match status" value="1"/>
</dbReference>
<dbReference type="SUPFAM" id="SSF52540">
    <property type="entry name" value="P-loop containing nucleoside triphosphate hydrolases"/>
    <property type="match status" value="1"/>
</dbReference>
<dbReference type="PROSITE" id="PS00039">
    <property type="entry name" value="DEAD_ATP_HELICASE"/>
    <property type="match status" value="1"/>
</dbReference>
<dbReference type="PROSITE" id="PS51192">
    <property type="entry name" value="HELICASE_ATP_BIND_1"/>
    <property type="match status" value="1"/>
</dbReference>
<dbReference type="PROSITE" id="PS51194">
    <property type="entry name" value="HELICASE_CTER"/>
    <property type="match status" value="1"/>
</dbReference>
<dbReference type="PROSITE" id="PS51195">
    <property type="entry name" value="Q_MOTIF"/>
    <property type="match status" value="1"/>
</dbReference>
<organism>
    <name type="scientific">Serratia proteamaculans (strain 568)</name>
    <dbReference type="NCBI Taxonomy" id="399741"/>
    <lineage>
        <taxon>Bacteria</taxon>
        <taxon>Pseudomonadati</taxon>
        <taxon>Pseudomonadota</taxon>
        <taxon>Gammaproteobacteria</taxon>
        <taxon>Enterobacterales</taxon>
        <taxon>Yersiniaceae</taxon>
        <taxon>Serratia</taxon>
    </lineage>
</organism>